<protein>
    <recommendedName>
        <fullName>Thermitase</fullName>
        <ecNumber>3.4.21.66</ecNumber>
    </recommendedName>
</protein>
<evidence type="ECO:0000255" key="1">
    <source>
        <dbReference type="PROSITE-ProRule" id="PRU01240"/>
    </source>
</evidence>
<evidence type="ECO:0000269" key="2">
    <source>
    </source>
</evidence>
<evidence type="ECO:0000269" key="3">
    <source>
    </source>
</evidence>
<evidence type="ECO:0000269" key="4">
    <source>
    </source>
</evidence>
<evidence type="ECO:0000305" key="5"/>
<evidence type="ECO:0007744" key="6">
    <source>
        <dbReference type="PDB" id="1TEC"/>
    </source>
</evidence>
<evidence type="ECO:0007744" key="7">
    <source>
        <dbReference type="PDB" id="1THM"/>
    </source>
</evidence>
<evidence type="ECO:0007744" key="8">
    <source>
        <dbReference type="PDB" id="2TEC"/>
    </source>
</evidence>
<evidence type="ECO:0007744" key="9">
    <source>
        <dbReference type="PDB" id="3TEC"/>
    </source>
</evidence>
<evidence type="ECO:0007829" key="10">
    <source>
        <dbReference type="PDB" id="1THM"/>
    </source>
</evidence>
<evidence type="ECO:0007829" key="11">
    <source>
        <dbReference type="PDB" id="2TEC"/>
    </source>
</evidence>
<evidence type="ECO:0007829" key="12">
    <source>
        <dbReference type="PDB" id="3TEC"/>
    </source>
</evidence>
<accession>P04072</accession>
<comment type="catalytic activity">
    <reaction>
        <text>Hydrolysis of proteins, including collagen.</text>
        <dbReference type="EC" id="3.4.21.66"/>
    </reaction>
</comment>
<comment type="cofactor">
    <cofactor evidence="3 4">
        <name>Ca(2+)</name>
        <dbReference type="ChEBI" id="CHEBI:29108"/>
    </cofactor>
    <cofactor evidence="4">
        <name>Na(+)</name>
        <dbReference type="ChEBI" id="CHEBI:29101"/>
    </cofactor>
    <text evidence="3 4">Binds 3 calcium ions or 2 calcium ions and 1 sodium ion per subunit. The sodium ion is bound at calcium concentrations up to 5 mM. At 100 mM calcium 3 calcium ions are bound.</text>
</comment>
<comment type="subcellular location">
    <subcellularLocation>
        <location>Secreted</location>
    </subcellularLocation>
</comment>
<comment type="similarity">
    <text evidence="5">Belongs to the peptidase S8 family.</text>
</comment>
<sequence>YTPNDPYFSSRQYGPQKIQAPQAWDIAEGSGAKIAIVDTGVQSNHPDLAGKVVGGWDFVDNDSTPQNGNGHGTHCAGIAAAVTNNSTGIAGTAPKASILAVRVLDNSGSGTWTAVANGITYAADQGAKVISLSLGGTVGNSGLQQAVNYAWNKGSVVVAAAGNAGNTAPNYPAYYSNAIAVASTDQNDNKSSFSTYGSVVDVAAPGSWIYSTYPTSTYASLSGTSMATPHVAGVAGLLASQGRSASNIRAAIENTADKISGTGTYWAKGRVNAYKAVQY</sequence>
<proteinExistence type="evidence at protein level"/>
<name>THET_THEVU</name>
<organism>
    <name type="scientific">Thermoactinomyces vulgaris</name>
    <dbReference type="NCBI Taxonomy" id="2026"/>
    <lineage>
        <taxon>Bacteria</taxon>
        <taxon>Bacillati</taxon>
        <taxon>Bacillota</taxon>
        <taxon>Bacilli</taxon>
        <taxon>Bacillales</taxon>
        <taxon>Thermoactinomycetaceae</taxon>
        <taxon>Thermoactinomyces</taxon>
    </lineage>
</organism>
<feature type="chain" id="PRO_0000076421" description="Thermitase">
    <location>
        <begin position="1"/>
        <end position="279"/>
    </location>
</feature>
<feature type="domain" description="Peptidase S8" evidence="1">
    <location>
        <begin position="12"/>
        <end position="277"/>
    </location>
</feature>
<feature type="active site" description="Charge relay system" evidence="1">
    <location>
        <position position="38"/>
    </location>
</feature>
<feature type="active site" description="Charge relay system" evidence="1">
    <location>
        <position position="71"/>
    </location>
</feature>
<feature type="active site" description="Charge relay system" evidence="1">
    <location>
        <position position="225"/>
    </location>
</feature>
<feature type="binding site" evidence="2 4 6 9">
    <location>
        <position position="5"/>
    </location>
    <ligand>
        <name>Ca(2+)</name>
        <dbReference type="ChEBI" id="CHEBI:29108"/>
        <label>1</label>
    </ligand>
</feature>
<feature type="binding site" evidence="2 4 6 9">
    <location>
        <position position="47"/>
    </location>
    <ligand>
        <name>Ca(2+)</name>
        <dbReference type="ChEBI" id="CHEBI:29108"/>
        <label>1</label>
    </ligand>
</feature>
<feature type="binding site" evidence="2 4 6 9">
    <location>
        <position position="57"/>
    </location>
    <ligand>
        <name>Ca(2+)</name>
        <dbReference type="ChEBI" id="CHEBI:29108"/>
        <label>2</label>
    </ligand>
</feature>
<feature type="binding site" evidence="2 4 6 9">
    <location>
        <position position="60"/>
    </location>
    <ligand>
        <name>Ca(2+)</name>
        <dbReference type="ChEBI" id="CHEBI:29108"/>
        <label>2</label>
    </ligand>
</feature>
<feature type="binding site" evidence="2 4 6 9">
    <location>
        <position position="62"/>
    </location>
    <ligand>
        <name>Ca(2+)</name>
        <dbReference type="ChEBI" id="CHEBI:29108"/>
        <label>2</label>
    </ligand>
</feature>
<feature type="binding site" evidence="2 4 6 9">
    <location>
        <position position="64"/>
    </location>
    <ligand>
        <name>Ca(2+)</name>
        <dbReference type="ChEBI" id="CHEBI:29108"/>
        <label>2</label>
    </ligand>
</feature>
<feature type="binding site" evidence="2 4 6 9">
    <location>
        <position position="66"/>
    </location>
    <ligand>
        <name>Ca(2+)</name>
        <dbReference type="ChEBI" id="CHEBI:29108"/>
        <label>2</label>
    </ligand>
</feature>
<feature type="binding site" evidence="2 4 6 9">
    <location>
        <position position="82"/>
    </location>
    <ligand>
        <name>Ca(2+)</name>
        <dbReference type="ChEBI" id="CHEBI:29108"/>
        <label>1</label>
    </ligand>
</feature>
<feature type="binding site" evidence="2 4 6 9">
    <location>
        <position position="85"/>
    </location>
    <ligand>
        <name>Ca(2+)</name>
        <dbReference type="ChEBI" id="CHEBI:29108"/>
        <label>1</label>
    </ligand>
</feature>
<feature type="binding site" evidence="2 4 6 9">
    <location>
        <position position="87"/>
    </location>
    <ligand>
        <name>Ca(2+)</name>
        <dbReference type="ChEBI" id="CHEBI:29108"/>
        <label>1</label>
    </ligand>
</feature>
<feature type="binding site" evidence="2 4 6 9">
    <location>
        <position position="89"/>
    </location>
    <ligand>
        <name>Ca(2+)</name>
        <dbReference type="ChEBI" id="CHEBI:29108"/>
        <label>1</label>
    </ligand>
</feature>
<feature type="binding site" evidence="4 6">
    <location>
        <position position="173"/>
    </location>
    <ligand>
        <name>Na(+)</name>
        <dbReference type="ChEBI" id="CHEBI:29101"/>
    </ligand>
</feature>
<feature type="binding site" evidence="4 6">
    <location>
        <position position="175"/>
    </location>
    <ligand>
        <name>Na(+)</name>
        <dbReference type="ChEBI" id="CHEBI:29101"/>
    </ligand>
</feature>
<feature type="binding site" evidence="4 6">
    <location>
        <position position="178"/>
    </location>
    <ligand>
        <name>Na(+)</name>
        <dbReference type="ChEBI" id="CHEBI:29101"/>
    </ligand>
</feature>
<feature type="binding site" evidence="2 9">
    <location>
        <position position="199"/>
    </location>
    <ligand>
        <name>Ca(2+)</name>
        <dbReference type="ChEBI" id="CHEBI:29108"/>
        <label>3</label>
    </ligand>
</feature>
<feature type="binding site" evidence="2 9">
    <location>
        <position position="201"/>
    </location>
    <ligand>
        <name>Ca(2+)</name>
        <dbReference type="ChEBI" id="CHEBI:29108"/>
        <label>3</label>
    </ligand>
</feature>
<feature type="binding site" evidence="4 6">
    <location>
        <position position="201"/>
    </location>
    <ligand>
        <name>Na(+)</name>
        <dbReference type="ChEBI" id="CHEBI:29101"/>
    </ligand>
</feature>
<feature type="helix" evidence="10">
    <location>
        <begin position="8"/>
        <end position="11"/>
    </location>
</feature>
<feature type="helix" evidence="10">
    <location>
        <begin position="14"/>
        <end position="17"/>
    </location>
</feature>
<feature type="helix" evidence="10">
    <location>
        <begin position="20"/>
        <end position="24"/>
    </location>
</feature>
<feature type="strand" evidence="10">
    <location>
        <begin position="33"/>
        <end position="39"/>
    </location>
</feature>
<feature type="turn" evidence="10">
    <location>
        <begin position="46"/>
        <end position="51"/>
    </location>
</feature>
<feature type="strand" evidence="10">
    <location>
        <begin position="52"/>
        <end position="57"/>
    </location>
</feature>
<feature type="turn" evidence="10">
    <location>
        <begin position="58"/>
        <end position="61"/>
    </location>
</feature>
<feature type="strand" evidence="10">
    <location>
        <begin position="68"/>
        <end position="70"/>
    </location>
</feature>
<feature type="helix" evidence="10">
    <location>
        <begin position="71"/>
        <end position="80"/>
    </location>
</feature>
<feature type="strand" evidence="10">
    <location>
        <begin position="84"/>
        <end position="88"/>
    </location>
</feature>
<feature type="strand" evidence="10">
    <location>
        <begin position="97"/>
        <end position="102"/>
    </location>
</feature>
<feature type="strand" evidence="11">
    <location>
        <begin position="108"/>
        <end position="110"/>
    </location>
</feature>
<feature type="helix" evidence="10">
    <location>
        <begin position="112"/>
        <end position="124"/>
    </location>
</feature>
<feature type="strand" evidence="10">
    <location>
        <begin position="128"/>
        <end position="132"/>
    </location>
</feature>
<feature type="strand" evidence="10">
    <location>
        <begin position="136"/>
        <end position="138"/>
    </location>
</feature>
<feature type="helix" evidence="10">
    <location>
        <begin position="141"/>
        <end position="152"/>
    </location>
</feature>
<feature type="strand" evidence="10">
    <location>
        <begin position="156"/>
        <end position="160"/>
    </location>
</feature>
<feature type="strand" evidence="10">
    <location>
        <begin position="163"/>
        <end position="166"/>
    </location>
</feature>
<feature type="turn" evidence="10">
    <location>
        <begin position="172"/>
        <end position="174"/>
    </location>
</feature>
<feature type="strand" evidence="10">
    <location>
        <begin position="178"/>
        <end position="184"/>
    </location>
</feature>
<feature type="strand" evidence="10">
    <location>
        <begin position="202"/>
        <end position="205"/>
    </location>
</feature>
<feature type="strand" evidence="10">
    <location>
        <begin position="207"/>
        <end position="213"/>
    </location>
</feature>
<feature type="turn" evidence="10">
    <location>
        <begin position="214"/>
        <end position="216"/>
    </location>
</feature>
<feature type="strand" evidence="10">
    <location>
        <begin position="217"/>
        <end position="221"/>
    </location>
</feature>
<feature type="helix" evidence="10">
    <location>
        <begin position="224"/>
        <end position="239"/>
    </location>
</feature>
<feature type="turn" evidence="10">
    <location>
        <begin position="240"/>
        <end position="242"/>
    </location>
</feature>
<feature type="helix" evidence="10">
    <location>
        <begin position="245"/>
        <end position="254"/>
    </location>
</feature>
<feature type="strand" evidence="12">
    <location>
        <begin position="255"/>
        <end position="257"/>
    </location>
</feature>
<feature type="turn" evidence="10">
    <location>
        <begin position="260"/>
        <end position="264"/>
    </location>
</feature>
<feature type="strand" evidence="10">
    <location>
        <begin position="267"/>
        <end position="270"/>
    </location>
</feature>
<feature type="helix" evidence="10">
    <location>
        <begin position="273"/>
        <end position="278"/>
    </location>
</feature>
<dbReference type="EC" id="3.4.21.66"/>
<dbReference type="PIR" id="A00973">
    <property type="entry name" value="SUMYTV"/>
</dbReference>
<dbReference type="PDB" id="1TEC">
    <property type="method" value="X-ray"/>
    <property type="resolution" value="2.20 A"/>
    <property type="chains" value="E=1-279"/>
</dbReference>
<dbReference type="PDB" id="1THM">
    <property type="method" value="X-ray"/>
    <property type="resolution" value="1.37 A"/>
    <property type="chains" value="A=1-279"/>
</dbReference>
<dbReference type="PDB" id="2TEC">
    <property type="method" value="X-ray"/>
    <property type="resolution" value="1.98 A"/>
    <property type="chains" value="E=1-279"/>
</dbReference>
<dbReference type="PDB" id="3TEC">
    <property type="method" value="X-ray"/>
    <property type="resolution" value="2.00 A"/>
    <property type="chains" value="E=1-279"/>
</dbReference>
<dbReference type="PDBsum" id="1TEC"/>
<dbReference type="PDBsum" id="1THM"/>
<dbReference type="PDBsum" id="2TEC"/>
<dbReference type="PDBsum" id="3TEC"/>
<dbReference type="SMR" id="P04072"/>
<dbReference type="MINT" id="P04072"/>
<dbReference type="MEROPS" id="S08.007"/>
<dbReference type="BRENDA" id="3.4.21.66">
    <property type="organism ID" value="6282"/>
</dbReference>
<dbReference type="EvolutionaryTrace" id="P04072"/>
<dbReference type="GO" id="GO:0005576">
    <property type="term" value="C:extracellular region"/>
    <property type="evidence" value="ECO:0007669"/>
    <property type="project" value="UniProtKB-SubCell"/>
</dbReference>
<dbReference type="GO" id="GO:0046872">
    <property type="term" value="F:metal ion binding"/>
    <property type="evidence" value="ECO:0007669"/>
    <property type="project" value="UniProtKB-KW"/>
</dbReference>
<dbReference type="GO" id="GO:0004252">
    <property type="term" value="F:serine-type endopeptidase activity"/>
    <property type="evidence" value="ECO:0007669"/>
    <property type="project" value="InterPro"/>
</dbReference>
<dbReference type="GO" id="GO:0006508">
    <property type="term" value="P:proteolysis"/>
    <property type="evidence" value="ECO:0007669"/>
    <property type="project" value="UniProtKB-KW"/>
</dbReference>
<dbReference type="CDD" id="cd07484">
    <property type="entry name" value="Peptidases_S8_Thermitase_like"/>
    <property type="match status" value="1"/>
</dbReference>
<dbReference type="Gene3D" id="3.40.50.200">
    <property type="entry name" value="Peptidase S8/S53 domain"/>
    <property type="match status" value="1"/>
</dbReference>
<dbReference type="InterPro" id="IPR000209">
    <property type="entry name" value="Peptidase_S8/S53_dom"/>
</dbReference>
<dbReference type="InterPro" id="IPR036852">
    <property type="entry name" value="Peptidase_S8/S53_dom_sf"/>
</dbReference>
<dbReference type="InterPro" id="IPR023827">
    <property type="entry name" value="Peptidase_S8_Asp-AS"/>
</dbReference>
<dbReference type="InterPro" id="IPR022398">
    <property type="entry name" value="Peptidase_S8_His-AS"/>
</dbReference>
<dbReference type="InterPro" id="IPR023828">
    <property type="entry name" value="Peptidase_S8_Ser-AS"/>
</dbReference>
<dbReference type="InterPro" id="IPR050131">
    <property type="entry name" value="Peptidase_S8_subtilisin-like"/>
</dbReference>
<dbReference type="InterPro" id="IPR015500">
    <property type="entry name" value="Peptidase_S8_subtilisin-rel"/>
</dbReference>
<dbReference type="InterPro" id="IPR034084">
    <property type="entry name" value="Thermitase-like_dom"/>
</dbReference>
<dbReference type="PANTHER" id="PTHR43806:SF11">
    <property type="entry name" value="CEREVISIN-RELATED"/>
    <property type="match status" value="1"/>
</dbReference>
<dbReference type="PANTHER" id="PTHR43806">
    <property type="entry name" value="PEPTIDASE S8"/>
    <property type="match status" value="1"/>
</dbReference>
<dbReference type="Pfam" id="PF00082">
    <property type="entry name" value="Peptidase_S8"/>
    <property type="match status" value="1"/>
</dbReference>
<dbReference type="PRINTS" id="PR00723">
    <property type="entry name" value="SUBTILISIN"/>
</dbReference>
<dbReference type="SUPFAM" id="SSF52743">
    <property type="entry name" value="Subtilisin-like"/>
    <property type="match status" value="1"/>
</dbReference>
<dbReference type="PROSITE" id="PS51892">
    <property type="entry name" value="SUBTILASE"/>
    <property type="match status" value="1"/>
</dbReference>
<dbReference type="PROSITE" id="PS00136">
    <property type="entry name" value="SUBTILASE_ASP"/>
    <property type="match status" value="1"/>
</dbReference>
<dbReference type="PROSITE" id="PS00137">
    <property type="entry name" value="SUBTILASE_HIS"/>
    <property type="match status" value="1"/>
</dbReference>
<dbReference type="PROSITE" id="PS00138">
    <property type="entry name" value="SUBTILASE_SER"/>
    <property type="match status" value="1"/>
</dbReference>
<keyword id="KW-0002">3D-structure</keyword>
<keyword id="KW-0106">Calcium</keyword>
<keyword id="KW-0903">Direct protein sequencing</keyword>
<keyword id="KW-0378">Hydrolase</keyword>
<keyword id="KW-0479">Metal-binding</keyword>
<keyword id="KW-0645">Protease</keyword>
<keyword id="KW-0964">Secreted</keyword>
<keyword id="KW-0720">Serine protease</keyword>
<keyword id="KW-0915">Sodium</keyword>
<reference key="1">
    <citation type="journal article" date="1985" name="FEBS Lett.">
        <title>Complete primary structure of thermitase from Thermoactinomyces vulgaris and its structural features related to the subtilisin-type proteinases.</title>
        <authorList>
            <person name="Meloun B."/>
            <person name="Baudys M."/>
            <person name="Kostka V."/>
            <person name="Hausdorf G."/>
            <person name="Frommel C."/>
            <person name="Hohne W.E."/>
        </authorList>
    </citation>
    <scope>PROTEIN SEQUENCE</scope>
</reference>
<reference evidence="6" key="2">
    <citation type="journal article" date="1989" name="Acta Crystallogr. B">
        <title>Crystallographic refinement by incorporation of molecular dynamics: thermostable serine protease thermitase complexed with eglin c.</title>
        <authorList>
            <person name="Gros P."/>
            <person name="Fujinaga M."/>
            <person name="Dijkstra B.W."/>
            <person name="Kalk K.H."/>
            <person name="Hol W.G."/>
        </authorList>
    </citation>
    <scope>X-RAY CRYSTALLOGRAPHY (2.20 ANGSTROMS) IN COMPLEX WITH CA(2+) AND NA(+)</scope>
</reference>
<reference key="3">
    <citation type="journal article" date="1989" name="FEBS Lett.">
        <title>Crystal structure of thermitase from Thermoactinomyces vulgaris at 2.2-A resolution.</title>
        <authorList>
            <person name="Teplyakov A.V."/>
            <person name="Kuranova I.P."/>
            <person name="Harutyunyan E.H."/>
            <person name="Frommel C."/>
            <person name="Hohne W.E."/>
        </authorList>
    </citation>
    <scope>X-RAY CRYSTALLOGRAPHY (2.2 ANGSTROMS)</scope>
</reference>
<reference evidence="8" key="4">
    <citation type="journal article" date="1989" name="J. Mol. Biol.">
        <title>Molecular dynamics refinement of a thermitase-eglin-c complex at 1.98-A resolution and comparison of two crystal forms that differ in calcium content.</title>
        <authorList>
            <person name="Gros P."/>
            <person name="Betzel C."/>
            <person name="Dauter Z."/>
            <person name="Wilson K.S."/>
            <person name="Hol W.G.J."/>
        </authorList>
    </citation>
    <scope>X-RAY CRYSTALLOGRAPHY (1.98 ANGSTROMS) IN COMPLEX WITH CA(2+)</scope>
</reference>
<reference evidence="7" key="5">
    <citation type="journal article" date="1990" name="J. Mol. Biol.">
        <title>Crystal structure of thermitase at 1.4-A resolution.</title>
        <authorList>
            <person name="Teplyakov A.V."/>
            <person name="Kuranova I.P."/>
            <person name="Harutyunyan E.H."/>
            <person name="Vainshtein B.K."/>
            <person name="Frommel C."/>
            <person name="Hohne W.E."/>
            <person name="Wilson K.S."/>
        </authorList>
    </citation>
    <scope>X-RAY CRYSTALLOGRAPHY (1.37 ANGSTROMS) IN COMPLEX WITH CA(2+)</scope>
</reference>
<reference evidence="9" key="6">
    <citation type="journal article" date="1991" name="J. Biol. Chem.">
        <title>Calcium binding to thermitase. Crystallographic studies of thermitase at 0, 5, and 100 mM calcium.</title>
        <authorList>
            <person name="Gros P."/>
            <person name="Kalk K.H."/>
            <person name="Hol W.G.J."/>
        </authorList>
    </citation>
    <scope>X-RAY CRYSTALLOGRAPHY (2.0 ANGSTROMS) IN COMPLEX WITH CA(2+)</scope>
</reference>